<evidence type="ECO:0000250" key="1"/>
<evidence type="ECO:0000255" key="2">
    <source>
        <dbReference type="HAMAP-Rule" id="MF_01057"/>
    </source>
</evidence>
<dbReference type="EC" id="2.1.1.33" evidence="2"/>
<dbReference type="EMBL" id="CP001283">
    <property type="protein sequence ID" value="ACK88870.1"/>
    <property type="molecule type" value="Genomic_DNA"/>
</dbReference>
<dbReference type="RefSeq" id="WP_001239380.1">
    <property type="nucleotide sequence ID" value="NC_011773.1"/>
</dbReference>
<dbReference type="SMR" id="B7JS74"/>
<dbReference type="GeneID" id="75087864"/>
<dbReference type="KEGG" id="bcu:BCAH820_4816"/>
<dbReference type="HOGENOM" id="CLU_050910_2_1_9"/>
<dbReference type="UniPathway" id="UPA00989"/>
<dbReference type="Proteomes" id="UP000001363">
    <property type="component" value="Chromosome"/>
</dbReference>
<dbReference type="GO" id="GO:0043527">
    <property type="term" value="C:tRNA methyltransferase complex"/>
    <property type="evidence" value="ECO:0007669"/>
    <property type="project" value="TreeGrafter"/>
</dbReference>
<dbReference type="GO" id="GO:0008176">
    <property type="term" value="F:tRNA (guanine(46)-N7)-methyltransferase activity"/>
    <property type="evidence" value="ECO:0007669"/>
    <property type="project" value="UniProtKB-UniRule"/>
</dbReference>
<dbReference type="CDD" id="cd02440">
    <property type="entry name" value="AdoMet_MTases"/>
    <property type="match status" value="1"/>
</dbReference>
<dbReference type="FunFam" id="3.40.50.150:FF:000035">
    <property type="entry name" value="tRNA (guanine-N(7)-)-methyltransferase"/>
    <property type="match status" value="1"/>
</dbReference>
<dbReference type="Gene3D" id="3.40.50.150">
    <property type="entry name" value="Vaccinia Virus protein VP39"/>
    <property type="match status" value="1"/>
</dbReference>
<dbReference type="HAMAP" id="MF_01057">
    <property type="entry name" value="tRNA_methyltr_TrmB"/>
    <property type="match status" value="1"/>
</dbReference>
<dbReference type="InterPro" id="IPR029063">
    <property type="entry name" value="SAM-dependent_MTases_sf"/>
</dbReference>
<dbReference type="InterPro" id="IPR003358">
    <property type="entry name" value="tRNA_(Gua-N-7)_MeTrfase_Trmb"/>
</dbReference>
<dbReference type="InterPro" id="IPR055361">
    <property type="entry name" value="tRNA_methyltr_TrmB_bact"/>
</dbReference>
<dbReference type="NCBIfam" id="NF001080">
    <property type="entry name" value="PRK00121.2-2"/>
    <property type="match status" value="1"/>
</dbReference>
<dbReference type="NCBIfam" id="TIGR00091">
    <property type="entry name" value="tRNA (guanosine(46)-N7)-methyltransferase TrmB"/>
    <property type="match status" value="1"/>
</dbReference>
<dbReference type="PANTHER" id="PTHR23417">
    <property type="entry name" value="3-DEOXY-D-MANNO-OCTULOSONIC-ACID TRANSFERASE/TRNA GUANINE-N 7 - -METHYLTRANSFERASE"/>
    <property type="match status" value="1"/>
</dbReference>
<dbReference type="PANTHER" id="PTHR23417:SF14">
    <property type="entry name" value="PENTACOTRIPEPTIDE-REPEAT REGION OF PRORP DOMAIN-CONTAINING PROTEIN"/>
    <property type="match status" value="1"/>
</dbReference>
<dbReference type="Pfam" id="PF02390">
    <property type="entry name" value="Methyltransf_4"/>
    <property type="match status" value="1"/>
</dbReference>
<dbReference type="SUPFAM" id="SSF53335">
    <property type="entry name" value="S-adenosyl-L-methionine-dependent methyltransferases"/>
    <property type="match status" value="1"/>
</dbReference>
<dbReference type="PROSITE" id="PS51625">
    <property type="entry name" value="SAM_MT_TRMB"/>
    <property type="match status" value="1"/>
</dbReference>
<accession>B7JS74</accession>
<proteinExistence type="inferred from homology"/>
<feature type="chain" id="PRO_1000136338" description="tRNA (guanine-N(7)-)-methyltransferase">
    <location>
        <begin position="1"/>
        <end position="217"/>
    </location>
</feature>
<feature type="active site" evidence="1">
    <location>
        <position position="118"/>
    </location>
</feature>
<feature type="binding site" evidence="2">
    <location>
        <position position="44"/>
    </location>
    <ligand>
        <name>S-adenosyl-L-methionine</name>
        <dbReference type="ChEBI" id="CHEBI:59789"/>
    </ligand>
</feature>
<feature type="binding site" evidence="2">
    <location>
        <position position="69"/>
    </location>
    <ligand>
        <name>S-adenosyl-L-methionine</name>
        <dbReference type="ChEBI" id="CHEBI:59789"/>
    </ligand>
</feature>
<feature type="binding site" evidence="2">
    <location>
        <position position="96"/>
    </location>
    <ligand>
        <name>S-adenosyl-L-methionine</name>
        <dbReference type="ChEBI" id="CHEBI:59789"/>
    </ligand>
</feature>
<feature type="binding site" evidence="2">
    <location>
        <position position="118"/>
    </location>
    <ligand>
        <name>S-adenosyl-L-methionine</name>
        <dbReference type="ChEBI" id="CHEBI:59789"/>
    </ligand>
</feature>
<feature type="binding site" evidence="2">
    <location>
        <position position="122"/>
    </location>
    <ligand>
        <name>substrate</name>
    </ligand>
</feature>
<feature type="binding site" evidence="2">
    <location>
        <position position="154"/>
    </location>
    <ligand>
        <name>substrate</name>
    </ligand>
</feature>
<feature type="binding site" evidence="2">
    <location>
        <begin position="191"/>
        <end position="194"/>
    </location>
    <ligand>
        <name>substrate</name>
    </ligand>
</feature>
<organism>
    <name type="scientific">Bacillus cereus (strain AH820)</name>
    <dbReference type="NCBI Taxonomy" id="405535"/>
    <lineage>
        <taxon>Bacteria</taxon>
        <taxon>Bacillati</taxon>
        <taxon>Bacillota</taxon>
        <taxon>Bacilli</taxon>
        <taxon>Bacillales</taxon>
        <taxon>Bacillaceae</taxon>
        <taxon>Bacillus</taxon>
        <taxon>Bacillus cereus group</taxon>
    </lineage>
</organism>
<reference key="1">
    <citation type="submission" date="2008-10" db="EMBL/GenBank/DDBJ databases">
        <title>Genome sequence of Bacillus cereus AH820.</title>
        <authorList>
            <person name="Dodson R.J."/>
            <person name="Durkin A.S."/>
            <person name="Rosovitz M.J."/>
            <person name="Rasko D.A."/>
            <person name="Hoffmaster A."/>
            <person name="Ravel J."/>
            <person name="Sutton G."/>
        </authorList>
    </citation>
    <scope>NUCLEOTIDE SEQUENCE [LARGE SCALE GENOMIC DNA]</scope>
    <source>
        <strain>AH820</strain>
    </source>
</reference>
<protein>
    <recommendedName>
        <fullName evidence="2">tRNA (guanine-N(7)-)-methyltransferase</fullName>
        <ecNumber evidence="2">2.1.1.33</ecNumber>
    </recommendedName>
    <alternativeName>
        <fullName evidence="2">tRNA (guanine(46)-N(7))-methyltransferase</fullName>
    </alternativeName>
    <alternativeName>
        <fullName evidence="2">tRNA(m7G46)-methyltransferase</fullName>
    </alternativeName>
</protein>
<comment type="function">
    <text evidence="2">Catalyzes the formation of N(7)-methylguanine at position 46 (m7G46) in tRNA.</text>
</comment>
<comment type="catalytic activity">
    <reaction evidence="2">
        <text>guanosine(46) in tRNA + S-adenosyl-L-methionine = N(7)-methylguanosine(46) in tRNA + S-adenosyl-L-homocysteine</text>
        <dbReference type="Rhea" id="RHEA:42708"/>
        <dbReference type="Rhea" id="RHEA-COMP:10188"/>
        <dbReference type="Rhea" id="RHEA-COMP:10189"/>
        <dbReference type="ChEBI" id="CHEBI:57856"/>
        <dbReference type="ChEBI" id="CHEBI:59789"/>
        <dbReference type="ChEBI" id="CHEBI:74269"/>
        <dbReference type="ChEBI" id="CHEBI:74480"/>
        <dbReference type="EC" id="2.1.1.33"/>
    </reaction>
</comment>
<comment type="pathway">
    <text evidence="2">tRNA modification; N(7)-methylguanine-tRNA biosynthesis.</text>
</comment>
<comment type="similarity">
    <text evidence="2">Belongs to the class I-like SAM-binding methyltransferase superfamily. TrmB family.</text>
</comment>
<name>TRMB_BACC0</name>
<gene>
    <name evidence="2" type="primary">trmB</name>
    <name type="ordered locus">BCAH820_4816</name>
</gene>
<keyword id="KW-0489">Methyltransferase</keyword>
<keyword id="KW-0949">S-adenosyl-L-methionine</keyword>
<keyword id="KW-0808">Transferase</keyword>
<keyword id="KW-0819">tRNA processing</keyword>
<sequence length="217" mass="25600">MRLRHKPYAMDRINEYSHIVIGNPEERAGNWKEVFGNEQPIHIEVGTGRGRFMYDMAKANPHINYIGIEKFTSVVVDALDKLIEEELPNLKLINKDAEDLTVFFAKGEIDRVYLNFSDPWPKKRHTKRRLTYKTFLRNYEEVLVEGGEIHFKTDNQGLFEYSLMSMAEYGMLLTYLSLDLHNSDFEGNIMTEYEEKFSSKGHRIYRVEAKYRTEPMQ</sequence>